<gene>
    <name type="primary">Brcc3</name>
    <name type="synonym">Brcc36</name>
    <name type="synonym">C6.1a</name>
</gene>
<feature type="initiator methionine" description="Removed" evidence="2">
    <location>
        <position position="1"/>
    </location>
</feature>
<feature type="chain" id="PRO_0000213968" description="Lys-63-specific deubiquitinase BRCC36">
    <location>
        <begin position="2"/>
        <end position="291"/>
    </location>
</feature>
<feature type="domain" description="MPN" evidence="3">
    <location>
        <begin position="12"/>
        <end position="179"/>
    </location>
</feature>
<feature type="short sequence motif" description="JAMM motif" evidence="3">
    <location>
        <begin position="122"/>
        <end position="135"/>
    </location>
</feature>
<feature type="binding site" evidence="3">
    <location>
        <position position="122"/>
    </location>
    <ligand>
        <name>Zn(2+)</name>
        <dbReference type="ChEBI" id="CHEBI:29105"/>
        <note>catalytic</note>
    </ligand>
</feature>
<feature type="binding site" evidence="3">
    <location>
        <position position="124"/>
    </location>
    <ligand>
        <name>Zn(2+)</name>
        <dbReference type="ChEBI" id="CHEBI:29105"/>
        <note>catalytic</note>
    </ligand>
</feature>
<feature type="binding site" evidence="3">
    <location>
        <position position="135"/>
    </location>
    <ligand>
        <name>Zn(2+)</name>
        <dbReference type="ChEBI" id="CHEBI:29105"/>
        <note>catalytic</note>
    </ligand>
</feature>
<feature type="modified residue" description="N-acetylalanine" evidence="2">
    <location>
        <position position="2"/>
    </location>
</feature>
<feature type="modified residue" description="Phosphoserine" evidence="2">
    <location>
        <position position="233"/>
    </location>
</feature>
<feature type="splice variant" id="VSP_037260" description="In isoform 2." evidence="7">
    <original>EYERIEIPIHIVPHITIGKVCLESAVELPKILCQEEQDAYRRIHS</original>
    <variation>D</variation>
    <location>
        <begin position="183"/>
        <end position="227"/>
    </location>
</feature>
<feature type="sequence conflict" description="In Ref. 2; BAE29117." evidence="7" ref="2">
    <original>A</original>
    <variation>S</variation>
    <location>
        <position position="108"/>
    </location>
</feature>
<feature type="sequence conflict" description="In Ref. 2; BAE29117." evidence="7" ref="2">
    <original>K</original>
    <variation>E</variation>
    <location>
        <position position="201"/>
    </location>
</feature>
<feature type="sequence conflict" description="In Ref. 2; BAB27894." evidence="7" ref="2">
    <original>K</original>
    <variation>R</variation>
    <location>
        <position position="280"/>
    </location>
</feature>
<reference key="1">
    <citation type="journal article" date="1993" name="Oncogene">
        <title>The chromosomal translocation t(X;14)(q28;q11) in T-cell pro-lymphocytic leukaemia breaks within one gene and activates another.</title>
        <authorList>
            <person name="Fisch P."/>
            <person name="Forster A."/>
            <person name="Sherrington P.D."/>
            <person name="Dyer M.J.S."/>
            <person name="Rabbitts T.H."/>
        </authorList>
    </citation>
    <scope>NUCLEOTIDE SEQUENCE [MRNA] (ISOFORM 1)</scope>
    <source>
        <tissue>Embryo</tissue>
    </source>
</reference>
<reference key="2">
    <citation type="journal article" date="2005" name="Science">
        <title>The transcriptional landscape of the mammalian genome.</title>
        <authorList>
            <person name="Carninci P."/>
            <person name="Kasukawa T."/>
            <person name="Katayama S."/>
            <person name="Gough J."/>
            <person name="Frith M.C."/>
            <person name="Maeda N."/>
            <person name="Oyama R."/>
            <person name="Ravasi T."/>
            <person name="Lenhard B."/>
            <person name="Wells C."/>
            <person name="Kodzius R."/>
            <person name="Shimokawa K."/>
            <person name="Bajic V.B."/>
            <person name="Brenner S.E."/>
            <person name="Batalov S."/>
            <person name="Forrest A.R."/>
            <person name="Zavolan M."/>
            <person name="Davis M.J."/>
            <person name="Wilming L.G."/>
            <person name="Aidinis V."/>
            <person name="Allen J.E."/>
            <person name="Ambesi-Impiombato A."/>
            <person name="Apweiler R."/>
            <person name="Aturaliya R.N."/>
            <person name="Bailey T.L."/>
            <person name="Bansal M."/>
            <person name="Baxter L."/>
            <person name="Beisel K.W."/>
            <person name="Bersano T."/>
            <person name="Bono H."/>
            <person name="Chalk A.M."/>
            <person name="Chiu K.P."/>
            <person name="Choudhary V."/>
            <person name="Christoffels A."/>
            <person name="Clutterbuck D.R."/>
            <person name="Crowe M.L."/>
            <person name="Dalla E."/>
            <person name="Dalrymple B.P."/>
            <person name="de Bono B."/>
            <person name="Della Gatta G."/>
            <person name="di Bernardo D."/>
            <person name="Down T."/>
            <person name="Engstrom P."/>
            <person name="Fagiolini M."/>
            <person name="Faulkner G."/>
            <person name="Fletcher C.F."/>
            <person name="Fukushima T."/>
            <person name="Furuno M."/>
            <person name="Futaki S."/>
            <person name="Gariboldi M."/>
            <person name="Georgii-Hemming P."/>
            <person name="Gingeras T.R."/>
            <person name="Gojobori T."/>
            <person name="Green R.E."/>
            <person name="Gustincich S."/>
            <person name="Harbers M."/>
            <person name="Hayashi Y."/>
            <person name="Hensch T.K."/>
            <person name="Hirokawa N."/>
            <person name="Hill D."/>
            <person name="Huminiecki L."/>
            <person name="Iacono M."/>
            <person name="Ikeo K."/>
            <person name="Iwama A."/>
            <person name="Ishikawa T."/>
            <person name="Jakt M."/>
            <person name="Kanapin A."/>
            <person name="Katoh M."/>
            <person name="Kawasawa Y."/>
            <person name="Kelso J."/>
            <person name="Kitamura H."/>
            <person name="Kitano H."/>
            <person name="Kollias G."/>
            <person name="Krishnan S.P."/>
            <person name="Kruger A."/>
            <person name="Kummerfeld S.K."/>
            <person name="Kurochkin I.V."/>
            <person name="Lareau L.F."/>
            <person name="Lazarevic D."/>
            <person name="Lipovich L."/>
            <person name="Liu J."/>
            <person name="Liuni S."/>
            <person name="McWilliam S."/>
            <person name="Madan Babu M."/>
            <person name="Madera M."/>
            <person name="Marchionni L."/>
            <person name="Matsuda H."/>
            <person name="Matsuzawa S."/>
            <person name="Miki H."/>
            <person name="Mignone F."/>
            <person name="Miyake S."/>
            <person name="Morris K."/>
            <person name="Mottagui-Tabar S."/>
            <person name="Mulder N."/>
            <person name="Nakano N."/>
            <person name="Nakauchi H."/>
            <person name="Ng P."/>
            <person name="Nilsson R."/>
            <person name="Nishiguchi S."/>
            <person name="Nishikawa S."/>
            <person name="Nori F."/>
            <person name="Ohara O."/>
            <person name="Okazaki Y."/>
            <person name="Orlando V."/>
            <person name="Pang K.C."/>
            <person name="Pavan W.J."/>
            <person name="Pavesi G."/>
            <person name="Pesole G."/>
            <person name="Petrovsky N."/>
            <person name="Piazza S."/>
            <person name="Reed J."/>
            <person name="Reid J.F."/>
            <person name="Ring B.Z."/>
            <person name="Ringwald M."/>
            <person name="Rost B."/>
            <person name="Ruan Y."/>
            <person name="Salzberg S.L."/>
            <person name="Sandelin A."/>
            <person name="Schneider C."/>
            <person name="Schoenbach C."/>
            <person name="Sekiguchi K."/>
            <person name="Semple C.A."/>
            <person name="Seno S."/>
            <person name="Sessa L."/>
            <person name="Sheng Y."/>
            <person name="Shibata Y."/>
            <person name="Shimada H."/>
            <person name="Shimada K."/>
            <person name="Silva D."/>
            <person name="Sinclair B."/>
            <person name="Sperling S."/>
            <person name="Stupka E."/>
            <person name="Sugiura K."/>
            <person name="Sultana R."/>
            <person name="Takenaka Y."/>
            <person name="Taki K."/>
            <person name="Tammoja K."/>
            <person name="Tan S.L."/>
            <person name="Tang S."/>
            <person name="Taylor M.S."/>
            <person name="Tegner J."/>
            <person name="Teichmann S.A."/>
            <person name="Ueda H.R."/>
            <person name="van Nimwegen E."/>
            <person name="Verardo R."/>
            <person name="Wei C.L."/>
            <person name="Yagi K."/>
            <person name="Yamanishi H."/>
            <person name="Zabarovsky E."/>
            <person name="Zhu S."/>
            <person name="Zimmer A."/>
            <person name="Hide W."/>
            <person name="Bult C."/>
            <person name="Grimmond S.M."/>
            <person name="Teasdale R.D."/>
            <person name="Liu E.T."/>
            <person name="Brusic V."/>
            <person name="Quackenbush J."/>
            <person name="Wahlestedt C."/>
            <person name="Mattick J.S."/>
            <person name="Hume D.A."/>
            <person name="Kai C."/>
            <person name="Sasaki D."/>
            <person name="Tomaru Y."/>
            <person name="Fukuda S."/>
            <person name="Kanamori-Katayama M."/>
            <person name="Suzuki M."/>
            <person name="Aoki J."/>
            <person name="Arakawa T."/>
            <person name="Iida J."/>
            <person name="Imamura K."/>
            <person name="Itoh M."/>
            <person name="Kato T."/>
            <person name="Kawaji H."/>
            <person name="Kawagashira N."/>
            <person name="Kawashima T."/>
            <person name="Kojima M."/>
            <person name="Kondo S."/>
            <person name="Konno H."/>
            <person name="Nakano K."/>
            <person name="Ninomiya N."/>
            <person name="Nishio T."/>
            <person name="Okada M."/>
            <person name="Plessy C."/>
            <person name="Shibata K."/>
            <person name="Shiraki T."/>
            <person name="Suzuki S."/>
            <person name="Tagami M."/>
            <person name="Waki K."/>
            <person name="Watahiki A."/>
            <person name="Okamura-Oho Y."/>
            <person name="Suzuki H."/>
            <person name="Kawai J."/>
            <person name="Hayashizaki Y."/>
        </authorList>
    </citation>
    <scope>NUCLEOTIDE SEQUENCE [LARGE SCALE MRNA] (ISOFORM 1)</scope>
    <source>
        <strain>C57BL/6J</strain>
        <tissue>Bone marrow</tissue>
        <tissue>Embryo</tissue>
    </source>
</reference>
<reference key="3">
    <citation type="journal article" date="2009" name="PLoS Biol.">
        <title>Lineage-specific biology revealed by a finished genome assembly of the mouse.</title>
        <authorList>
            <person name="Church D.M."/>
            <person name="Goodstadt L."/>
            <person name="Hillier L.W."/>
            <person name="Zody M.C."/>
            <person name="Goldstein S."/>
            <person name="She X."/>
            <person name="Bult C.J."/>
            <person name="Agarwala R."/>
            <person name="Cherry J.L."/>
            <person name="DiCuccio M."/>
            <person name="Hlavina W."/>
            <person name="Kapustin Y."/>
            <person name="Meric P."/>
            <person name="Maglott D."/>
            <person name="Birtle Z."/>
            <person name="Marques A.C."/>
            <person name="Graves T."/>
            <person name="Zhou S."/>
            <person name="Teague B."/>
            <person name="Potamousis K."/>
            <person name="Churas C."/>
            <person name="Place M."/>
            <person name="Herschleb J."/>
            <person name="Runnheim R."/>
            <person name="Forrest D."/>
            <person name="Amos-Landgraf J."/>
            <person name="Schwartz D.C."/>
            <person name="Cheng Z."/>
            <person name="Lindblad-Toh K."/>
            <person name="Eichler E.E."/>
            <person name="Ponting C.P."/>
        </authorList>
    </citation>
    <scope>NUCLEOTIDE SEQUENCE [LARGE SCALE GENOMIC DNA]</scope>
    <scope>ALTERNATIVE SPLICING (ISOFORMS 1 AND 2)</scope>
    <source>
        <strain>C57BL/6J</strain>
    </source>
</reference>
<reference key="4">
    <citation type="journal article" date="2004" name="Genome Res.">
        <title>The status, quality, and expansion of the NIH full-length cDNA project: the Mammalian Gene Collection (MGC).</title>
        <authorList>
            <consortium name="The MGC Project Team"/>
        </authorList>
    </citation>
    <scope>NUCLEOTIDE SEQUENCE [LARGE SCALE MRNA] (ISOFORM 1)</scope>
    <source>
        <strain>C57BL/6J</strain>
        <tissue>Brain</tissue>
        <tissue>Mammary tumor</tissue>
    </source>
</reference>
<reference key="5">
    <citation type="journal article" date="2010" name="Cell">
        <title>A tissue-specific atlas of mouse protein phosphorylation and expression.</title>
        <authorList>
            <person name="Huttlin E.L."/>
            <person name="Jedrychowski M.P."/>
            <person name="Elias J.E."/>
            <person name="Goswami T."/>
            <person name="Rad R."/>
            <person name="Beausoleil S.A."/>
            <person name="Villen J."/>
            <person name="Haas W."/>
            <person name="Sowa M.E."/>
            <person name="Gygi S.P."/>
        </authorList>
    </citation>
    <scope>IDENTIFICATION BY MASS SPECTROMETRY [LARGE SCALE ANALYSIS]</scope>
    <source>
        <tissue>Brain</tissue>
        <tissue>Brown adipose tissue</tissue>
        <tissue>Heart</tissue>
        <tissue>Kidney</tissue>
        <tissue>Liver</tissue>
        <tissue>Lung</tissue>
        <tissue>Pancreas</tissue>
        <tissue>Spleen</tissue>
        <tissue>Testis</tissue>
    </source>
</reference>
<reference key="6">
    <citation type="journal article" date="2013" name="Mol. Cell">
        <title>Deubiquitination of NLRP3 by BRCC3 critically regulates inflammasome activity.</title>
        <authorList>
            <person name="Py B.F."/>
            <person name="Kim M.S."/>
            <person name="Vakifahmetoglu-Norberg H."/>
            <person name="Yuan J."/>
        </authorList>
    </citation>
    <scope>FUNCTION</scope>
</reference>
<reference key="7">
    <citation type="journal article" date="2017" name="Mol. Cell">
        <title>NLRP3 phosphorylation is an essential priming event for inflammasome activation.</title>
        <authorList>
            <person name="Song N."/>
            <person name="Liu Z.S."/>
            <person name="Xue W."/>
            <person name="Bai Z.F."/>
            <person name="Wang Q.Y."/>
            <person name="Dai J."/>
            <person name="Liu X."/>
            <person name="Huang Y.J."/>
            <person name="Cai H."/>
            <person name="Zhan X.Y."/>
            <person name="Han Q.Y."/>
            <person name="Wang H."/>
            <person name="Chen Y."/>
            <person name="Li H.Y."/>
            <person name="Li A.L."/>
            <person name="Zhang X.M."/>
            <person name="Zhou T."/>
            <person name="Li T."/>
        </authorList>
    </citation>
    <scope>FUNCTION</scope>
</reference>
<reference key="8">
    <citation type="journal article" date="2021" name="Adv. Sci.">
        <title>PWWP2B Fine-Tunes Adipose Thermogenesis by Stabilizing HDACs in a NuRD Subcomplex.</title>
        <authorList>
            <person name="Yan L."/>
            <person name="Jin W."/>
            <person name="Zhao Q."/>
            <person name="Cui X."/>
            <person name="Shi T."/>
            <person name="Xu Y."/>
            <person name="Li F."/>
            <person name="Jin W."/>
            <person name="Zhang Z."/>
            <person name="Zhang Z."/>
            <person name="Tang Q.Q."/>
            <person name="Pan D."/>
        </authorList>
    </citation>
    <scope>FUNCTION</scope>
    <scope>INTERACTION WITH PWWP2B AND HDAC1</scope>
</reference>
<organism>
    <name type="scientific">Mus musculus</name>
    <name type="common">Mouse</name>
    <dbReference type="NCBI Taxonomy" id="10090"/>
    <lineage>
        <taxon>Eukaryota</taxon>
        <taxon>Metazoa</taxon>
        <taxon>Chordata</taxon>
        <taxon>Craniata</taxon>
        <taxon>Vertebrata</taxon>
        <taxon>Euteleostomi</taxon>
        <taxon>Mammalia</taxon>
        <taxon>Eutheria</taxon>
        <taxon>Euarchontoglires</taxon>
        <taxon>Glires</taxon>
        <taxon>Rodentia</taxon>
        <taxon>Myomorpha</taxon>
        <taxon>Muroidea</taxon>
        <taxon>Muridae</taxon>
        <taxon>Murinae</taxon>
        <taxon>Mus</taxon>
        <taxon>Mus</taxon>
    </lineage>
</organism>
<name>BRCC3_MOUSE</name>
<protein>
    <recommendedName>
        <fullName>Lys-63-specific deubiquitinase BRCC36</fullName>
        <ecNumber evidence="2">3.4.19.-</ecNumber>
    </recommendedName>
    <alternativeName>
        <fullName>BRCA1-A complex subunit BRCC36</fullName>
    </alternativeName>
    <alternativeName>
        <fullName>BRCA1/BRCA2-containing complex subunit 3</fullName>
    </alternativeName>
    <alternativeName>
        <fullName>BRCA1/BRCA2-containing complex subunit 36</fullName>
    </alternativeName>
    <alternativeName>
        <fullName>BRISC complex subunit BRCC36</fullName>
    </alternativeName>
</protein>
<dbReference type="EC" id="3.4.19.-" evidence="2"/>
<dbReference type="EMBL" id="S68022">
    <property type="protein sequence ID" value="AAB29006.2"/>
    <property type="molecule type" value="mRNA"/>
</dbReference>
<dbReference type="EMBL" id="AK011876">
    <property type="protein sequence ID" value="BAB27894.1"/>
    <property type="molecule type" value="mRNA"/>
</dbReference>
<dbReference type="EMBL" id="AK149844">
    <property type="protein sequence ID" value="BAE29117.1"/>
    <property type="molecule type" value="mRNA"/>
</dbReference>
<dbReference type="EMBL" id="AL671860">
    <property type="status" value="NOT_ANNOTATED_CDS"/>
    <property type="molecule type" value="Genomic_DNA"/>
</dbReference>
<dbReference type="EMBL" id="BC021313">
    <property type="protein sequence ID" value="AAH21313.1"/>
    <property type="molecule type" value="mRNA"/>
</dbReference>
<dbReference type="EMBL" id="BC048179">
    <property type="protein sequence ID" value="AAH48179.1"/>
    <property type="molecule type" value="mRNA"/>
</dbReference>
<dbReference type="CCDS" id="CCDS41031.1">
    <molecule id="P46737-1"/>
</dbReference>
<dbReference type="RefSeq" id="NP_001159929.1">
    <molecule id="P46737-1"/>
    <property type="nucleotide sequence ID" value="NM_001166457.1"/>
</dbReference>
<dbReference type="RefSeq" id="NP_001159931.1">
    <molecule id="P46737-1"/>
    <property type="nucleotide sequence ID" value="NM_001166459.1"/>
</dbReference>
<dbReference type="RefSeq" id="NP_001345665.1">
    <molecule id="P46737-1"/>
    <property type="nucleotide sequence ID" value="NM_001358736.1"/>
</dbReference>
<dbReference type="RefSeq" id="NP_001345666.1">
    <molecule id="P46737-1"/>
    <property type="nucleotide sequence ID" value="NM_001358737.1"/>
</dbReference>
<dbReference type="RefSeq" id="NP_666068.1">
    <molecule id="P46737-1"/>
    <property type="nucleotide sequence ID" value="NM_145956.4"/>
</dbReference>
<dbReference type="RefSeq" id="XP_011245856.1">
    <property type="nucleotide sequence ID" value="XM_011247554.2"/>
</dbReference>
<dbReference type="PDB" id="6GVW">
    <property type="method" value="X-ray"/>
    <property type="resolution" value="3.75 A"/>
    <property type="chains" value="B/G=1-291"/>
</dbReference>
<dbReference type="PDBsum" id="6GVW"/>
<dbReference type="SMR" id="P46737"/>
<dbReference type="BioGRID" id="229180">
    <property type="interactions" value="26"/>
</dbReference>
<dbReference type="ComplexPortal" id="CPX-4702">
    <property type="entry name" value="BRCA1-A complex"/>
</dbReference>
<dbReference type="ComplexPortal" id="CPX-972">
    <property type="entry name" value="BRCC ubiquitin ligase complex"/>
</dbReference>
<dbReference type="FunCoup" id="P46737">
    <property type="interactions" value="2877"/>
</dbReference>
<dbReference type="IntAct" id="P46737">
    <property type="interactions" value="2"/>
</dbReference>
<dbReference type="MINT" id="P46737"/>
<dbReference type="STRING" id="10090.ENSMUSP00000033544"/>
<dbReference type="MEROPS" id="M67.004"/>
<dbReference type="iPTMnet" id="P46737"/>
<dbReference type="PhosphoSitePlus" id="P46737"/>
<dbReference type="jPOST" id="P46737"/>
<dbReference type="PaxDb" id="10090-ENSMUSP00000033544"/>
<dbReference type="PeptideAtlas" id="P46737"/>
<dbReference type="ProteomicsDB" id="273700">
    <molecule id="P46737-1"/>
</dbReference>
<dbReference type="ProteomicsDB" id="273701">
    <molecule id="P46737-2"/>
</dbReference>
<dbReference type="Pumba" id="P46737"/>
<dbReference type="DNASU" id="210766"/>
<dbReference type="Ensembl" id="ENSMUST00000033544.14">
    <molecule id="P46737-1"/>
    <property type="protein sequence ID" value="ENSMUSP00000033544.8"/>
    <property type="gene ID" value="ENSMUSG00000031201.18"/>
</dbReference>
<dbReference type="Ensembl" id="ENSMUST00000114074.8">
    <molecule id="P46737-1"/>
    <property type="protein sequence ID" value="ENSMUSP00000109708.2"/>
    <property type="gene ID" value="ENSMUSG00000031201.18"/>
</dbReference>
<dbReference type="Ensembl" id="ENSMUST00000118428.8">
    <molecule id="P46737-2"/>
    <property type="protein sequence ID" value="ENSMUSP00000114057.2"/>
    <property type="gene ID" value="ENSMUSG00000031201.18"/>
</dbReference>
<dbReference type="GeneID" id="210766"/>
<dbReference type="KEGG" id="mmu:210766"/>
<dbReference type="UCSC" id="uc009tpy.2">
    <molecule id="P46737-1"/>
    <property type="organism name" value="mouse"/>
</dbReference>
<dbReference type="AGR" id="MGI:2389572"/>
<dbReference type="CTD" id="79184"/>
<dbReference type="MGI" id="MGI:2389572">
    <property type="gene designation" value="Brcc3"/>
</dbReference>
<dbReference type="VEuPathDB" id="HostDB:ENSMUSG00000031201"/>
<dbReference type="eggNOG" id="KOG1555">
    <property type="taxonomic scope" value="Eukaryota"/>
</dbReference>
<dbReference type="GeneTree" id="ENSGT00390000000360"/>
<dbReference type="HOGENOM" id="CLU_053351_0_0_1"/>
<dbReference type="InParanoid" id="P46737"/>
<dbReference type="OMA" id="CIGEIDT"/>
<dbReference type="OrthoDB" id="446074at2759"/>
<dbReference type="PhylomeDB" id="P46737"/>
<dbReference type="TreeFam" id="TF328524"/>
<dbReference type="Reactome" id="R-MMU-5689901">
    <property type="pathway name" value="Metalloprotease DUBs"/>
</dbReference>
<dbReference type="Reactome" id="R-MMU-5693565">
    <property type="pathway name" value="Recruitment and ATM-mediated phosphorylation of repair and signaling proteins at DNA double strand breaks"/>
</dbReference>
<dbReference type="Reactome" id="R-MMU-5693571">
    <property type="pathway name" value="Nonhomologous End-Joining (NHEJ)"/>
</dbReference>
<dbReference type="Reactome" id="R-MMU-5693607">
    <property type="pathway name" value="Processing of DNA double-strand break ends"/>
</dbReference>
<dbReference type="Reactome" id="R-MMU-69473">
    <property type="pathway name" value="G2/M DNA damage checkpoint"/>
</dbReference>
<dbReference type="BioGRID-ORCS" id="210766">
    <property type="hits" value="19 hits in 115 CRISPR screens"/>
</dbReference>
<dbReference type="ChiTaRS" id="Brcc3">
    <property type="organism name" value="mouse"/>
</dbReference>
<dbReference type="PRO" id="PR:P46737"/>
<dbReference type="Proteomes" id="UP000000589">
    <property type="component" value="Chromosome X"/>
</dbReference>
<dbReference type="RNAct" id="P46737">
    <property type="molecule type" value="protein"/>
</dbReference>
<dbReference type="Bgee" id="ENSMUSG00000031201">
    <property type="expression patterns" value="Expressed in embryonic post-anal tail and 252 other cell types or tissues"/>
</dbReference>
<dbReference type="ExpressionAtlas" id="P46737">
    <property type="expression patterns" value="baseline and differential"/>
</dbReference>
<dbReference type="GO" id="GO:0070531">
    <property type="term" value="C:BRCA1-A complex"/>
    <property type="evidence" value="ECO:0000250"/>
    <property type="project" value="UniProtKB"/>
</dbReference>
<dbReference type="GO" id="GO:0070552">
    <property type="term" value="C:BRISC complex"/>
    <property type="evidence" value="ECO:0000250"/>
    <property type="project" value="UniProtKB"/>
</dbReference>
<dbReference type="GO" id="GO:0005737">
    <property type="term" value="C:cytoplasm"/>
    <property type="evidence" value="ECO:0007669"/>
    <property type="project" value="UniProtKB-SubCell"/>
</dbReference>
<dbReference type="GO" id="GO:0000152">
    <property type="term" value="C:nuclear ubiquitin ligase complex"/>
    <property type="evidence" value="ECO:0000266"/>
    <property type="project" value="ComplexPortal"/>
</dbReference>
<dbReference type="GO" id="GO:0005634">
    <property type="term" value="C:nucleus"/>
    <property type="evidence" value="ECO:0000250"/>
    <property type="project" value="UniProtKB"/>
</dbReference>
<dbReference type="GO" id="GO:0000922">
    <property type="term" value="C:spindle pole"/>
    <property type="evidence" value="ECO:0007669"/>
    <property type="project" value="UniProtKB-SubCell"/>
</dbReference>
<dbReference type="GO" id="GO:0000151">
    <property type="term" value="C:ubiquitin ligase complex"/>
    <property type="evidence" value="ECO:0000266"/>
    <property type="project" value="MGI"/>
</dbReference>
<dbReference type="GO" id="GO:0004843">
    <property type="term" value="F:cysteine-type deubiquitinase activity"/>
    <property type="evidence" value="ECO:0007669"/>
    <property type="project" value="InterPro"/>
</dbReference>
<dbReference type="GO" id="GO:0030234">
    <property type="term" value="F:enzyme regulator activity"/>
    <property type="evidence" value="ECO:0000266"/>
    <property type="project" value="MGI"/>
</dbReference>
<dbReference type="GO" id="GO:0046872">
    <property type="term" value="F:metal ion binding"/>
    <property type="evidence" value="ECO:0007669"/>
    <property type="project" value="UniProtKB-KW"/>
</dbReference>
<dbReference type="GO" id="GO:0140492">
    <property type="term" value="F:metal-dependent deubiquitinase activity"/>
    <property type="evidence" value="ECO:0000314"/>
    <property type="project" value="UniProtKB"/>
</dbReference>
<dbReference type="GO" id="GO:0008237">
    <property type="term" value="F:metallopeptidase activity"/>
    <property type="evidence" value="ECO:0000250"/>
    <property type="project" value="UniProtKB"/>
</dbReference>
<dbReference type="GO" id="GO:0031593">
    <property type="term" value="F:polyubiquitin modification-dependent protein binding"/>
    <property type="evidence" value="ECO:0000250"/>
    <property type="project" value="UniProtKB"/>
</dbReference>
<dbReference type="GO" id="GO:0051301">
    <property type="term" value="P:cell division"/>
    <property type="evidence" value="ECO:0007669"/>
    <property type="project" value="UniProtKB-KW"/>
</dbReference>
<dbReference type="GO" id="GO:0071479">
    <property type="term" value="P:cellular response to ionizing radiation"/>
    <property type="evidence" value="ECO:0000266"/>
    <property type="project" value="ComplexPortal"/>
</dbReference>
<dbReference type="GO" id="GO:0006338">
    <property type="term" value="P:chromatin remodeling"/>
    <property type="evidence" value="ECO:0000314"/>
    <property type="project" value="UniProtKB"/>
</dbReference>
<dbReference type="GO" id="GO:0140861">
    <property type="term" value="P:DNA repair-dependent chromatin remodeling"/>
    <property type="evidence" value="ECO:0000250"/>
    <property type="project" value="UniProtKB"/>
</dbReference>
<dbReference type="GO" id="GO:0006302">
    <property type="term" value="P:double-strand break repair"/>
    <property type="evidence" value="ECO:0000250"/>
    <property type="project" value="UniProtKB"/>
</dbReference>
<dbReference type="GO" id="GO:0007095">
    <property type="term" value="P:mitotic G2 DNA damage checkpoint signaling"/>
    <property type="evidence" value="ECO:0000250"/>
    <property type="project" value="UniProtKB"/>
</dbReference>
<dbReference type="GO" id="GO:0044818">
    <property type="term" value="P:mitotic G2/M transition checkpoint"/>
    <property type="evidence" value="ECO:0000303"/>
    <property type="project" value="ComplexPortal"/>
</dbReference>
<dbReference type="GO" id="GO:0045739">
    <property type="term" value="P:positive regulation of DNA repair"/>
    <property type="evidence" value="ECO:0000250"/>
    <property type="project" value="UniProtKB"/>
</dbReference>
<dbReference type="GO" id="GO:1900227">
    <property type="term" value="P:positive regulation of NLRP3 inflammasome complex assembly"/>
    <property type="evidence" value="ECO:0000314"/>
    <property type="project" value="UniProtKB"/>
</dbReference>
<dbReference type="GO" id="GO:0070536">
    <property type="term" value="P:protein K63-linked deubiquitination"/>
    <property type="evidence" value="ECO:0000314"/>
    <property type="project" value="UniProtKB"/>
</dbReference>
<dbReference type="GO" id="GO:0006508">
    <property type="term" value="P:proteolysis"/>
    <property type="evidence" value="ECO:0007669"/>
    <property type="project" value="UniProtKB-KW"/>
</dbReference>
<dbReference type="GO" id="GO:2000001">
    <property type="term" value="P:regulation of DNA damage checkpoint"/>
    <property type="evidence" value="ECO:0000303"/>
    <property type="project" value="ComplexPortal"/>
</dbReference>
<dbReference type="GO" id="GO:0006282">
    <property type="term" value="P:regulation of DNA repair"/>
    <property type="evidence" value="ECO:0000303"/>
    <property type="project" value="ComplexPortal"/>
</dbReference>
<dbReference type="GO" id="GO:0010212">
    <property type="term" value="P:response to ionizing radiation"/>
    <property type="evidence" value="ECO:0000250"/>
    <property type="project" value="UniProtKB"/>
</dbReference>
<dbReference type="GO" id="GO:0010165">
    <property type="term" value="P:response to X-ray"/>
    <property type="evidence" value="ECO:0000266"/>
    <property type="project" value="MGI"/>
</dbReference>
<dbReference type="CDD" id="cd08068">
    <property type="entry name" value="MPN_BRCC36"/>
    <property type="match status" value="1"/>
</dbReference>
<dbReference type="FunFam" id="3.40.140.10:FF:000015">
    <property type="entry name" value="Lys-63-specific deubiquitinase BRCC36 isoform 3"/>
    <property type="match status" value="1"/>
</dbReference>
<dbReference type="Gene3D" id="3.40.140.10">
    <property type="entry name" value="Cytidine Deaminase, domain 2"/>
    <property type="match status" value="1"/>
</dbReference>
<dbReference type="InterPro" id="IPR040749">
    <property type="entry name" value="BRCC36_C"/>
</dbReference>
<dbReference type="InterPro" id="IPR000555">
    <property type="entry name" value="JAMM/MPN+_dom"/>
</dbReference>
<dbReference type="InterPro" id="IPR050242">
    <property type="entry name" value="JAMM_MPN+_peptidase_M67A"/>
</dbReference>
<dbReference type="InterPro" id="IPR037518">
    <property type="entry name" value="MPN"/>
</dbReference>
<dbReference type="InterPro" id="IPR033860">
    <property type="entry name" value="MPN_BRCC36"/>
</dbReference>
<dbReference type="PANTHER" id="PTHR10410">
    <property type="entry name" value="EUKARYOTIC TRANSLATION INITIATION FACTOR 3 -RELATED"/>
    <property type="match status" value="1"/>
</dbReference>
<dbReference type="Pfam" id="PF18110">
    <property type="entry name" value="BRCC36_C"/>
    <property type="match status" value="1"/>
</dbReference>
<dbReference type="Pfam" id="PF01398">
    <property type="entry name" value="JAB"/>
    <property type="match status" value="1"/>
</dbReference>
<dbReference type="SMART" id="SM00232">
    <property type="entry name" value="JAB_MPN"/>
    <property type="match status" value="1"/>
</dbReference>
<dbReference type="SUPFAM" id="SSF102712">
    <property type="entry name" value="JAB1/MPN domain"/>
    <property type="match status" value="1"/>
</dbReference>
<dbReference type="PROSITE" id="PS50249">
    <property type="entry name" value="MPN"/>
    <property type="match status" value="1"/>
</dbReference>
<proteinExistence type="evidence at protein level"/>
<evidence type="ECO:0000250" key="1">
    <source>
        <dbReference type="UniProtKB" id="E2AXC7"/>
    </source>
</evidence>
<evidence type="ECO:0000250" key="2">
    <source>
        <dbReference type="UniProtKB" id="P46736"/>
    </source>
</evidence>
<evidence type="ECO:0000255" key="3">
    <source>
        <dbReference type="PROSITE-ProRule" id="PRU01182"/>
    </source>
</evidence>
<evidence type="ECO:0000269" key="4">
    <source>
    </source>
</evidence>
<evidence type="ECO:0000269" key="5">
    <source>
    </source>
</evidence>
<evidence type="ECO:0000269" key="6">
    <source>
    </source>
</evidence>
<evidence type="ECO:0000305" key="7"/>
<comment type="function">
    <text evidence="2 4 5 6">Metalloprotease that specifically cleaves 'Lys-63'-linked polyubiquitin chains (PubMed:23246432, PubMed:34180153). Does not have activity toward 'Lys-48'-linked polyubiquitin chains (By similarity). Component of the BRCA1-A complex, a complex that specifically recognizes 'Lys-63'-linked ubiquitinated histones H2A and H2AX at DNA lesions sites, leading to target the BRCA1-BARD1 heterodimer to sites of DNA damage at double-strand breaks (DSBs) (By similarity). In the BRCA1-A complex, it specifically removes 'Lys-63'-linked ubiquitin on histones H2A and H2AX, antagonizing the RNF8-dependent ubiquitination at double-strand breaks (DSBs) (By similarity). Catalytic subunit of the BRISC complex, a multiprotein complex that specifically cleaves 'Lys-63'-linked ubiquitin in various substrates (By similarity). Mediates the specific 'Lys-63'-specific deubiquitination associated with the COP9 signalosome complex (CSN), via the interaction of the BRISC complex with the CSN complex (By similarity). The BRISC complex is required for normal mitotic spindle assembly and microtubule attachment to kinetochores via its role in deubiquitinating NUMA1 (By similarity). Plays a role in interferon signaling via its role in the deubiquitination of the interferon receptor IFNAR1; deubiquitination increases IFNAR1 activity by enhancing its stability and cell surface expression (By similarity). Acts as a regulator of the NLRP3 inflammasome by mediating deubiquitination of NLRP3, leading to NLRP3 inflammasome assembly (PubMed:23246432, PubMed:28943315). Down-regulates the response to bacterial lipopolysaccharide (LPS) via its role in IFNAR1 deubiquitination (By similarity). Deubiquitinates HDAC1 and PWWP2B leading to their stabilization (PubMed:34180153).</text>
</comment>
<comment type="cofactor">
    <cofactor evidence="1 2">
        <name>Zn(2+)</name>
        <dbReference type="ChEBI" id="CHEBI:29105"/>
    </cofactor>
    <text evidence="1">Binds 1 zinc ion per subunit.</text>
</comment>
<comment type="subunit">
    <text evidence="2 6">Component of the ARISC complex, at least composed of UIMC1/RAP80, ABRAXAS1, BRCC3/BRCC36, BABAM2 and BABAM1/NBA1. Component of the BRCA1-A complex, at least composed of BRCA1, BARD1, UIMC1/RAP80, ABRAXAS1, BRCC3/BRCC36, BABAM2 and BABAM1/NBA1. In the BRCA1-A complex, interacts directly with ABRAXAS1 and BABAM2. Component of the BRISC complex, at least composed of ABRAXAS2, BRCC3/BRCC36, BABAM2 and BABAM1/NBA1. Identified in a complex with SHMT2 and the other subunits of the BRISC complex. In the BRISC complex, interacts directly with ABRAXAS2. Identified in a complex with ABRAXAS2 and NUMA1. The BRISC complex interacts with the CSN complex. Component of the BRCA1/BRCA2 containing complex (BRCC), which also contains BRCA1, BRCA2, BARD1, BABAM2 and RAD51. BRCC is a ubiquitin E3 ligase complex that enhances cellular survival following DNA damage. Interacts with BRCA1. Binds polyubiquitin (By similarity). Interacts with PWWP2B (PubMed:34180153). Interacts with HDAC1; this interaction is enhanced in the presence of PWWP2B (PubMed:34180153).</text>
</comment>
<comment type="subcellular location">
    <subcellularLocation>
        <location evidence="2">Nucleus</location>
    </subcellularLocation>
    <subcellularLocation>
        <location evidence="2">Cytoplasm</location>
    </subcellularLocation>
    <subcellularLocation>
        <location evidence="2">Cytoplasm</location>
        <location evidence="2">Cytoskeleton</location>
        <location evidence="2">Spindle pole</location>
    </subcellularLocation>
    <text evidence="2">Localizes at sites of DNA damage at double-strand breaks (DSBs). Interaction with ABRAXAS2 retains BRCC3 in the cytoplasm.</text>
</comment>
<comment type="alternative products">
    <event type="alternative splicing"/>
    <isoform>
        <id>P46737-1</id>
        <name>1</name>
        <sequence type="displayed"/>
    </isoform>
    <isoform>
        <id>P46737-2</id>
        <name>2</name>
        <sequence type="described" ref="VSP_037260"/>
    </isoform>
</comment>
<comment type="similarity">
    <text evidence="7">Belongs to the peptidase M67A family. BRCC36 subfamily.</text>
</comment>
<sequence length="291" mass="33340">MAVQVVQAVQAVHLESDAFLVCLNHALSTEKEEVMGLCIGELNDDIRSDSKFTYTGTEMRTVQEKMDTIRIVHIHSVIILRRSDKRKDRVEISPEQLSAASTEAERLAELTGRPMRVVGWYHSHPHITVWPSHVDVRTQAMYQMMDQGFVGLIFSCFIEDKNTKTGRVLYTCFQSIQAQKSSEYERIEIPIHIVPHITIGKVCLESAVELPKILCQEEQDAYRRIHSLTHLDSVTKIHNGSVFTKNLCSQMSAVSGPLLQWLEDRLEQNQQHLQELQQEKEELMEELSSLE</sequence>
<accession>P46737</accession>
<accession>A3KGA9</accession>
<accession>A8Y5K0</accession>
<accession>Q3UDZ4</accession>
<accession>Q9D025</accession>
<keyword id="KW-0002">3D-structure</keyword>
<keyword id="KW-0007">Acetylation</keyword>
<keyword id="KW-0025">Alternative splicing</keyword>
<keyword id="KW-0131">Cell cycle</keyword>
<keyword id="KW-0132">Cell division</keyword>
<keyword id="KW-0156">Chromatin regulator</keyword>
<keyword id="KW-0963">Cytoplasm</keyword>
<keyword id="KW-0206">Cytoskeleton</keyword>
<keyword id="KW-0227">DNA damage</keyword>
<keyword id="KW-0234">DNA repair</keyword>
<keyword id="KW-0378">Hydrolase</keyword>
<keyword id="KW-0479">Metal-binding</keyword>
<keyword id="KW-0482">Metalloprotease</keyword>
<keyword id="KW-0498">Mitosis</keyword>
<keyword id="KW-0539">Nucleus</keyword>
<keyword id="KW-0597">Phosphoprotein</keyword>
<keyword id="KW-0645">Protease</keyword>
<keyword id="KW-1185">Reference proteome</keyword>
<keyword id="KW-0833">Ubl conjugation pathway</keyword>
<keyword id="KW-0862">Zinc</keyword>